<reference key="1">
    <citation type="journal article" date="2007" name="PLoS Genet.">
        <title>Patterns and implications of gene gain and loss in the evolution of Prochlorococcus.</title>
        <authorList>
            <person name="Kettler G.C."/>
            <person name="Martiny A.C."/>
            <person name="Huang K."/>
            <person name="Zucker J."/>
            <person name="Coleman M.L."/>
            <person name="Rodrigue S."/>
            <person name="Chen F."/>
            <person name="Lapidus A."/>
            <person name="Ferriera S."/>
            <person name="Johnson J."/>
            <person name="Steglich C."/>
            <person name="Church G.M."/>
            <person name="Richardson P."/>
            <person name="Chisholm S.W."/>
        </authorList>
    </citation>
    <scope>NUCLEOTIDE SEQUENCE [LARGE SCALE GENOMIC DNA]</scope>
    <source>
        <strain>NATL2A</strain>
    </source>
</reference>
<sequence length="100" mass="11646">MAKKSMIARDVKRKKLVERYAAKRKSLIEAFKSAKDPMERLEIHRKIQALPRNCAPNRIRNRCWATGKPRGVYRDFGLCRNQLRSRAHNGELPGVVKSSW</sequence>
<protein>
    <recommendedName>
        <fullName evidence="1">Small ribosomal subunit protein uS14</fullName>
    </recommendedName>
    <alternativeName>
        <fullName evidence="2">30S ribosomal protein S14</fullName>
    </alternativeName>
</protein>
<dbReference type="EMBL" id="CP000095">
    <property type="protein sequence ID" value="AAZ58300.1"/>
    <property type="molecule type" value="Genomic_DNA"/>
</dbReference>
<dbReference type="RefSeq" id="WP_011294897.1">
    <property type="nucleotide sequence ID" value="NC_007335.2"/>
</dbReference>
<dbReference type="SMR" id="Q46JM8"/>
<dbReference type="STRING" id="59920.PMN2A_0809"/>
<dbReference type="KEGG" id="pmn:PMN2A_0809"/>
<dbReference type="HOGENOM" id="CLU_139869_0_1_3"/>
<dbReference type="OrthoDB" id="9810484at2"/>
<dbReference type="PhylomeDB" id="Q46JM8"/>
<dbReference type="Proteomes" id="UP000002535">
    <property type="component" value="Chromosome"/>
</dbReference>
<dbReference type="GO" id="GO:0005737">
    <property type="term" value="C:cytoplasm"/>
    <property type="evidence" value="ECO:0007669"/>
    <property type="project" value="UniProtKB-ARBA"/>
</dbReference>
<dbReference type="GO" id="GO:0015935">
    <property type="term" value="C:small ribosomal subunit"/>
    <property type="evidence" value="ECO:0007669"/>
    <property type="project" value="TreeGrafter"/>
</dbReference>
<dbReference type="GO" id="GO:0019843">
    <property type="term" value="F:rRNA binding"/>
    <property type="evidence" value="ECO:0007669"/>
    <property type="project" value="UniProtKB-UniRule"/>
</dbReference>
<dbReference type="GO" id="GO:0003735">
    <property type="term" value="F:structural constituent of ribosome"/>
    <property type="evidence" value="ECO:0007669"/>
    <property type="project" value="InterPro"/>
</dbReference>
<dbReference type="GO" id="GO:0006412">
    <property type="term" value="P:translation"/>
    <property type="evidence" value="ECO:0007669"/>
    <property type="project" value="UniProtKB-UniRule"/>
</dbReference>
<dbReference type="FunFam" id="1.10.287.1480:FF:000001">
    <property type="entry name" value="30S ribosomal protein S14"/>
    <property type="match status" value="1"/>
</dbReference>
<dbReference type="Gene3D" id="1.10.287.1480">
    <property type="match status" value="1"/>
</dbReference>
<dbReference type="HAMAP" id="MF_00537">
    <property type="entry name" value="Ribosomal_uS14_1"/>
    <property type="match status" value="1"/>
</dbReference>
<dbReference type="InterPro" id="IPR001209">
    <property type="entry name" value="Ribosomal_uS14"/>
</dbReference>
<dbReference type="InterPro" id="IPR023036">
    <property type="entry name" value="Ribosomal_uS14_bac/plastid"/>
</dbReference>
<dbReference type="InterPro" id="IPR018271">
    <property type="entry name" value="Ribosomal_uS14_CS"/>
</dbReference>
<dbReference type="NCBIfam" id="NF006477">
    <property type="entry name" value="PRK08881.1"/>
    <property type="match status" value="1"/>
</dbReference>
<dbReference type="PANTHER" id="PTHR19836">
    <property type="entry name" value="30S RIBOSOMAL PROTEIN S14"/>
    <property type="match status" value="1"/>
</dbReference>
<dbReference type="PANTHER" id="PTHR19836:SF19">
    <property type="entry name" value="SMALL RIBOSOMAL SUBUNIT PROTEIN US14M"/>
    <property type="match status" value="1"/>
</dbReference>
<dbReference type="Pfam" id="PF00253">
    <property type="entry name" value="Ribosomal_S14"/>
    <property type="match status" value="1"/>
</dbReference>
<dbReference type="SUPFAM" id="SSF57716">
    <property type="entry name" value="Glucocorticoid receptor-like (DNA-binding domain)"/>
    <property type="match status" value="1"/>
</dbReference>
<dbReference type="PROSITE" id="PS00527">
    <property type="entry name" value="RIBOSOMAL_S14"/>
    <property type="match status" value="1"/>
</dbReference>
<organism>
    <name type="scientific">Prochlorococcus marinus (strain NATL2A)</name>
    <dbReference type="NCBI Taxonomy" id="59920"/>
    <lineage>
        <taxon>Bacteria</taxon>
        <taxon>Bacillati</taxon>
        <taxon>Cyanobacteriota</taxon>
        <taxon>Cyanophyceae</taxon>
        <taxon>Synechococcales</taxon>
        <taxon>Prochlorococcaceae</taxon>
        <taxon>Prochlorococcus</taxon>
    </lineage>
</organism>
<accession>Q46JM8</accession>
<keyword id="KW-1185">Reference proteome</keyword>
<keyword id="KW-0687">Ribonucleoprotein</keyword>
<keyword id="KW-0689">Ribosomal protein</keyword>
<keyword id="KW-0694">RNA-binding</keyword>
<keyword id="KW-0699">rRNA-binding</keyword>
<name>RS14_PROMT</name>
<gene>
    <name evidence="1" type="primary">rpsN</name>
    <name evidence="1" type="synonym">rps14</name>
    <name type="ordered locus">PMN2A_0809</name>
</gene>
<comment type="function">
    <text evidence="1">Binds 16S rRNA, required for the assembly of 30S particles and may also be responsible for determining the conformation of the 16S rRNA at the A site.</text>
</comment>
<comment type="subunit">
    <text evidence="1">Part of the 30S ribosomal subunit. Contacts proteins S3 and S10.</text>
</comment>
<comment type="similarity">
    <text evidence="1">Belongs to the universal ribosomal protein uS14 family.</text>
</comment>
<feature type="chain" id="PRO_1000128507" description="Small ribosomal subunit protein uS14">
    <location>
        <begin position="1"/>
        <end position="100"/>
    </location>
</feature>
<proteinExistence type="inferred from homology"/>
<evidence type="ECO:0000255" key="1">
    <source>
        <dbReference type="HAMAP-Rule" id="MF_00537"/>
    </source>
</evidence>
<evidence type="ECO:0000305" key="2"/>